<name>OTC_RUTMC</name>
<protein>
    <recommendedName>
        <fullName evidence="2">Ornithine carbamoyltransferase</fullName>
        <shortName evidence="2">OTCase</shortName>
        <ecNumber evidence="2">2.1.3.3</ecNumber>
    </recommendedName>
</protein>
<feature type="chain" id="PRO_1000065116" description="Ornithine carbamoyltransferase">
    <location>
        <begin position="1"/>
        <end position="299"/>
    </location>
</feature>
<feature type="binding site" evidence="2">
    <location>
        <begin position="52"/>
        <end position="55"/>
    </location>
    <ligand>
        <name>carbamoyl phosphate</name>
        <dbReference type="ChEBI" id="CHEBI:58228"/>
    </ligand>
</feature>
<feature type="binding site" evidence="2">
    <location>
        <position position="79"/>
    </location>
    <ligand>
        <name>carbamoyl phosphate</name>
        <dbReference type="ChEBI" id="CHEBI:58228"/>
    </ligand>
</feature>
<feature type="binding site" evidence="2">
    <location>
        <position position="103"/>
    </location>
    <ligand>
        <name>carbamoyl phosphate</name>
        <dbReference type="ChEBI" id="CHEBI:58228"/>
    </ligand>
</feature>
<feature type="binding site" evidence="2">
    <location>
        <begin position="130"/>
        <end position="133"/>
    </location>
    <ligand>
        <name>carbamoyl phosphate</name>
        <dbReference type="ChEBI" id="CHEBI:58228"/>
    </ligand>
</feature>
<feature type="binding site" evidence="2">
    <location>
        <position position="161"/>
    </location>
    <ligand>
        <name>L-ornithine</name>
        <dbReference type="ChEBI" id="CHEBI:46911"/>
    </ligand>
</feature>
<feature type="binding site" evidence="2">
    <location>
        <position position="218"/>
    </location>
    <ligand>
        <name>L-ornithine</name>
        <dbReference type="ChEBI" id="CHEBI:46911"/>
    </ligand>
</feature>
<feature type="binding site" evidence="2">
    <location>
        <begin position="222"/>
        <end position="223"/>
    </location>
    <ligand>
        <name>L-ornithine</name>
        <dbReference type="ChEBI" id="CHEBI:46911"/>
    </ligand>
</feature>
<feature type="binding site" evidence="2">
    <location>
        <begin position="258"/>
        <end position="259"/>
    </location>
    <ligand>
        <name>carbamoyl phosphate</name>
        <dbReference type="ChEBI" id="CHEBI:58228"/>
    </ligand>
</feature>
<feature type="binding site" evidence="2">
    <location>
        <position position="286"/>
    </location>
    <ligand>
        <name>carbamoyl phosphate</name>
        <dbReference type="ChEBI" id="CHEBI:58228"/>
    </ligand>
</feature>
<accession>A1AWA3</accession>
<reference key="1">
    <citation type="journal article" date="2007" name="Science">
        <title>The Calyptogena magnifica chemoautotrophic symbiont genome.</title>
        <authorList>
            <person name="Newton I.L.G."/>
            <person name="Woyke T."/>
            <person name="Auchtung T.A."/>
            <person name="Dilly G.F."/>
            <person name="Dutton R.J."/>
            <person name="Fisher M.C."/>
            <person name="Fontanez K.M."/>
            <person name="Lau E."/>
            <person name="Stewart F.J."/>
            <person name="Richardson P.M."/>
            <person name="Barry K.W."/>
            <person name="Saunders E."/>
            <person name="Detter J.C."/>
            <person name="Wu D."/>
            <person name="Eisen J.A."/>
            <person name="Cavanaugh C.M."/>
        </authorList>
    </citation>
    <scope>NUCLEOTIDE SEQUENCE [LARGE SCALE GENOMIC DNA]</scope>
</reference>
<evidence type="ECO:0000250" key="1"/>
<evidence type="ECO:0000255" key="2">
    <source>
        <dbReference type="HAMAP-Rule" id="MF_01109"/>
    </source>
</evidence>
<sequence length="299" mass="33601">MIKHFINLDDLPNHDLTQIIKQAIALKKQYKSGKINKILEHKTLAMIFDKSSTRTRVSFEAGMTQLGGHALFLSDKDIQLGRGEPIIDSAIVISSMVDVIMMRISSHKDIHTFAENSSVPIINALSDESHPCQLLSDMMTYQEHNGSIANKTIAWIGDGNNMCHTYMQAAKSFNFKLNIATPKNYQPDQDFIEKYANHIHLFTDAQKACQKVDLVVTDVWASMGQEAEQTKRKITFKDFSVNAALMSKAKPSAVFMHCLPAHRGEEVSTNVIDGSQSLVWLEAENRLHVQKALLLYLLN</sequence>
<keyword id="KW-0028">Amino-acid biosynthesis</keyword>
<keyword id="KW-0055">Arginine biosynthesis</keyword>
<keyword id="KW-0963">Cytoplasm</keyword>
<keyword id="KW-0808">Transferase</keyword>
<dbReference type="EC" id="2.1.3.3" evidence="2"/>
<dbReference type="EMBL" id="CP000488">
    <property type="protein sequence ID" value="ABL02210.1"/>
    <property type="molecule type" value="Genomic_DNA"/>
</dbReference>
<dbReference type="RefSeq" id="WP_011737835.1">
    <property type="nucleotide sequence ID" value="NC_008610.1"/>
</dbReference>
<dbReference type="SMR" id="A1AWA3"/>
<dbReference type="STRING" id="413404.Rmag_0452"/>
<dbReference type="KEGG" id="rma:Rmag_0452"/>
<dbReference type="eggNOG" id="COG0078">
    <property type="taxonomic scope" value="Bacteria"/>
</dbReference>
<dbReference type="HOGENOM" id="CLU_043846_3_2_6"/>
<dbReference type="OrthoDB" id="9802587at2"/>
<dbReference type="UniPathway" id="UPA00068">
    <property type="reaction ID" value="UER00112"/>
</dbReference>
<dbReference type="Proteomes" id="UP000002587">
    <property type="component" value="Chromosome"/>
</dbReference>
<dbReference type="GO" id="GO:0005737">
    <property type="term" value="C:cytoplasm"/>
    <property type="evidence" value="ECO:0007669"/>
    <property type="project" value="UniProtKB-SubCell"/>
</dbReference>
<dbReference type="GO" id="GO:0016597">
    <property type="term" value="F:amino acid binding"/>
    <property type="evidence" value="ECO:0007669"/>
    <property type="project" value="InterPro"/>
</dbReference>
<dbReference type="GO" id="GO:0004585">
    <property type="term" value="F:ornithine carbamoyltransferase activity"/>
    <property type="evidence" value="ECO:0007669"/>
    <property type="project" value="UniProtKB-UniRule"/>
</dbReference>
<dbReference type="GO" id="GO:0042450">
    <property type="term" value="P:arginine biosynthetic process via ornithine"/>
    <property type="evidence" value="ECO:0007669"/>
    <property type="project" value="TreeGrafter"/>
</dbReference>
<dbReference type="GO" id="GO:0019240">
    <property type="term" value="P:citrulline biosynthetic process"/>
    <property type="evidence" value="ECO:0007669"/>
    <property type="project" value="TreeGrafter"/>
</dbReference>
<dbReference type="GO" id="GO:0006526">
    <property type="term" value="P:L-arginine biosynthetic process"/>
    <property type="evidence" value="ECO:0007669"/>
    <property type="project" value="UniProtKB-UniRule"/>
</dbReference>
<dbReference type="FunFam" id="3.40.50.1370:FF:000008">
    <property type="entry name" value="Ornithine carbamoyltransferase"/>
    <property type="match status" value="1"/>
</dbReference>
<dbReference type="Gene3D" id="3.40.50.1370">
    <property type="entry name" value="Aspartate/ornithine carbamoyltransferase"/>
    <property type="match status" value="2"/>
</dbReference>
<dbReference type="HAMAP" id="MF_01109">
    <property type="entry name" value="OTCase"/>
    <property type="match status" value="1"/>
</dbReference>
<dbReference type="InterPro" id="IPR006132">
    <property type="entry name" value="Asp/Orn_carbamoyltranf_P-bd"/>
</dbReference>
<dbReference type="InterPro" id="IPR006130">
    <property type="entry name" value="Asp/Orn_carbamoylTrfase"/>
</dbReference>
<dbReference type="InterPro" id="IPR036901">
    <property type="entry name" value="Asp/Orn_carbamoylTrfase_sf"/>
</dbReference>
<dbReference type="InterPro" id="IPR006131">
    <property type="entry name" value="Asp_carbamoyltransf_Asp/Orn-bd"/>
</dbReference>
<dbReference type="InterPro" id="IPR002292">
    <property type="entry name" value="Orn/put_carbamltrans"/>
</dbReference>
<dbReference type="InterPro" id="IPR024904">
    <property type="entry name" value="OTCase_ArgI"/>
</dbReference>
<dbReference type="NCBIfam" id="TIGR00658">
    <property type="entry name" value="orni_carb_tr"/>
    <property type="match status" value="1"/>
</dbReference>
<dbReference type="NCBIfam" id="NF001986">
    <property type="entry name" value="PRK00779.1"/>
    <property type="match status" value="1"/>
</dbReference>
<dbReference type="PANTHER" id="PTHR45753">
    <property type="entry name" value="ORNITHINE CARBAMOYLTRANSFERASE, MITOCHONDRIAL"/>
    <property type="match status" value="1"/>
</dbReference>
<dbReference type="PANTHER" id="PTHR45753:SF3">
    <property type="entry name" value="ORNITHINE TRANSCARBAMYLASE, MITOCHONDRIAL"/>
    <property type="match status" value="1"/>
</dbReference>
<dbReference type="Pfam" id="PF00185">
    <property type="entry name" value="OTCace"/>
    <property type="match status" value="1"/>
</dbReference>
<dbReference type="Pfam" id="PF02729">
    <property type="entry name" value="OTCace_N"/>
    <property type="match status" value="1"/>
</dbReference>
<dbReference type="PRINTS" id="PR00100">
    <property type="entry name" value="AOTCASE"/>
</dbReference>
<dbReference type="PRINTS" id="PR00102">
    <property type="entry name" value="OTCASE"/>
</dbReference>
<dbReference type="SUPFAM" id="SSF53671">
    <property type="entry name" value="Aspartate/ornithine carbamoyltransferase"/>
    <property type="match status" value="1"/>
</dbReference>
<dbReference type="PROSITE" id="PS00097">
    <property type="entry name" value="CARBAMOYLTRANSFERASE"/>
    <property type="match status" value="1"/>
</dbReference>
<gene>
    <name evidence="2" type="primary">argF</name>
    <name type="ordered locus">Rmag_0452</name>
</gene>
<organism>
    <name type="scientific">Ruthia magnifica subsp. Calyptogena magnifica</name>
    <dbReference type="NCBI Taxonomy" id="413404"/>
    <lineage>
        <taxon>Bacteria</taxon>
        <taxon>Pseudomonadati</taxon>
        <taxon>Pseudomonadota</taxon>
        <taxon>Gammaproteobacteria</taxon>
        <taxon>Candidatus Pseudothioglobaceae</taxon>
        <taxon>Candidatus Ruthturnera</taxon>
    </lineage>
</organism>
<proteinExistence type="inferred from homology"/>
<comment type="function">
    <text evidence="1">Reversibly catalyzes the transfer of the carbamoyl group from carbamoyl phosphate (CP) to the N(epsilon) atom of ornithine (ORN) to produce L-citrulline.</text>
</comment>
<comment type="catalytic activity">
    <reaction evidence="2">
        <text>carbamoyl phosphate + L-ornithine = L-citrulline + phosphate + H(+)</text>
        <dbReference type="Rhea" id="RHEA:19513"/>
        <dbReference type="ChEBI" id="CHEBI:15378"/>
        <dbReference type="ChEBI" id="CHEBI:43474"/>
        <dbReference type="ChEBI" id="CHEBI:46911"/>
        <dbReference type="ChEBI" id="CHEBI:57743"/>
        <dbReference type="ChEBI" id="CHEBI:58228"/>
        <dbReference type="EC" id="2.1.3.3"/>
    </reaction>
</comment>
<comment type="pathway">
    <text evidence="2">Amino-acid biosynthesis; L-arginine biosynthesis; L-arginine from L-ornithine and carbamoyl phosphate: step 1/3.</text>
</comment>
<comment type="subcellular location">
    <subcellularLocation>
        <location evidence="2">Cytoplasm</location>
    </subcellularLocation>
</comment>
<comment type="similarity">
    <text evidence="2">Belongs to the aspartate/ornithine carbamoyltransferase superfamily. OTCase family.</text>
</comment>